<feature type="chain" id="PRO_1000061093" description="Peptidase T">
    <location>
        <begin position="1"/>
        <end position="410"/>
    </location>
</feature>
<feature type="active site" evidence="1">
    <location>
        <position position="81"/>
    </location>
</feature>
<feature type="active site" description="Proton acceptor" evidence="1">
    <location>
        <position position="176"/>
    </location>
</feature>
<feature type="binding site" evidence="1">
    <location>
        <position position="79"/>
    </location>
    <ligand>
        <name>Zn(2+)</name>
        <dbReference type="ChEBI" id="CHEBI:29105"/>
        <label>1</label>
    </ligand>
</feature>
<feature type="binding site" evidence="1">
    <location>
        <position position="142"/>
    </location>
    <ligand>
        <name>Zn(2+)</name>
        <dbReference type="ChEBI" id="CHEBI:29105"/>
        <label>1</label>
    </ligand>
</feature>
<feature type="binding site" evidence="1">
    <location>
        <position position="142"/>
    </location>
    <ligand>
        <name>Zn(2+)</name>
        <dbReference type="ChEBI" id="CHEBI:29105"/>
        <label>2</label>
    </ligand>
</feature>
<feature type="binding site" evidence="1">
    <location>
        <position position="177"/>
    </location>
    <ligand>
        <name>Zn(2+)</name>
        <dbReference type="ChEBI" id="CHEBI:29105"/>
        <label>2</label>
    </ligand>
</feature>
<feature type="binding site" evidence="1">
    <location>
        <position position="199"/>
    </location>
    <ligand>
        <name>Zn(2+)</name>
        <dbReference type="ChEBI" id="CHEBI:29105"/>
        <label>1</label>
    </ligand>
</feature>
<feature type="binding site" evidence="1">
    <location>
        <position position="381"/>
    </location>
    <ligand>
        <name>Zn(2+)</name>
        <dbReference type="ChEBI" id="CHEBI:29105"/>
        <label>2</label>
    </ligand>
</feature>
<sequence length="410" mass="45739">MKEEMIQRFTSYVKVDTQSDADKESCPSTEGQLNLARQLVEEMKSIGIQEVTMDENGYVMGTIPSNTDKDVPTIGFLAHIDTATDFTGKNVKPQLHENYQGGDITLNEDLHIVLSPTQFPNLQKYQGHTLITTDGTTLLGADNKAGIAEIMTAMHYLIEHPEIKHGKIRVAFTPDEEIGRGPHKFDVEAFGASYAYTIDGGPLGELQYESFNAAGAKVSIKGNNVHPGTAKDKMVSAAKIGMLFHNKLPSDESPEYTEGYEGFFHLTKFVGEVEEAELQYIIRDFDKDKFNDRKALFEKIASDLKAIYGENSINLKIQDQYYNMREKIEPVKHIVDIAHEAMENRSVTPVIEPIRGGTDGSQLSYKGLPTPNIFTGGENFHGKYEFISVENMVKATEVIVEIARLFEEKA</sequence>
<accession>A8FIY2</accession>
<keyword id="KW-0031">Aminopeptidase</keyword>
<keyword id="KW-0963">Cytoplasm</keyword>
<keyword id="KW-0378">Hydrolase</keyword>
<keyword id="KW-0479">Metal-binding</keyword>
<keyword id="KW-0482">Metalloprotease</keyword>
<keyword id="KW-0645">Protease</keyword>
<keyword id="KW-0862">Zinc</keyword>
<dbReference type="EC" id="3.4.11.4" evidence="1"/>
<dbReference type="EMBL" id="CP000813">
    <property type="protein sequence ID" value="ABV64199.1"/>
    <property type="molecule type" value="Genomic_DNA"/>
</dbReference>
<dbReference type="RefSeq" id="WP_012011750.1">
    <property type="nucleotide sequence ID" value="NZ_VEIS01000002.1"/>
</dbReference>
<dbReference type="SMR" id="A8FIY2"/>
<dbReference type="STRING" id="315750.BPUM_3555"/>
<dbReference type="MEROPS" id="M20.003"/>
<dbReference type="GeneID" id="5622844"/>
<dbReference type="KEGG" id="bpu:BPUM_3555"/>
<dbReference type="eggNOG" id="COG2195">
    <property type="taxonomic scope" value="Bacteria"/>
</dbReference>
<dbReference type="HOGENOM" id="CLU_053676_0_0_9"/>
<dbReference type="OrthoDB" id="9804934at2"/>
<dbReference type="Proteomes" id="UP000001355">
    <property type="component" value="Chromosome"/>
</dbReference>
<dbReference type="GO" id="GO:0005829">
    <property type="term" value="C:cytosol"/>
    <property type="evidence" value="ECO:0007669"/>
    <property type="project" value="TreeGrafter"/>
</dbReference>
<dbReference type="GO" id="GO:0008237">
    <property type="term" value="F:metallopeptidase activity"/>
    <property type="evidence" value="ECO:0007669"/>
    <property type="project" value="UniProtKB-KW"/>
</dbReference>
<dbReference type="GO" id="GO:0045148">
    <property type="term" value="F:tripeptide aminopeptidase activity"/>
    <property type="evidence" value="ECO:0007669"/>
    <property type="project" value="UniProtKB-UniRule"/>
</dbReference>
<dbReference type="GO" id="GO:0008270">
    <property type="term" value="F:zinc ion binding"/>
    <property type="evidence" value="ECO:0007669"/>
    <property type="project" value="UniProtKB-UniRule"/>
</dbReference>
<dbReference type="GO" id="GO:0043171">
    <property type="term" value="P:peptide catabolic process"/>
    <property type="evidence" value="ECO:0007669"/>
    <property type="project" value="UniProtKB-UniRule"/>
</dbReference>
<dbReference type="GO" id="GO:0006508">
    <property type="term" value="P:proteolysis"/>
    <property type="evidence" value="ECO:0007669"/>
    <property type="project" value="UniProtKB-UniRule"/>
</dbReference>
<dbReference type="CDD" id="cd03892">
    <property type="entry name" value="M20_peptT"/>
    <property type="match status" value="1"/>
</dbReference>
<dbReference type="FunFam" id="3.30.70.360:FF:000002">
    <property type="entry name" value="Peptidase T"/>
    <property type="match status" value="1"/>
</dbReference>
<dbReference type="Gene3D" id="3.30.70.360">
    <property type="match status" value="1"/>
</dbReference>
<dbReference type="Gene3D" id="3.40.630.10">
    <property type="entry name" value="Zn peptidases"/>
    <property type="match status" value="1"/>
</dbReference>
<dbReference type="HAMAP" id="MF_00550">
    <property type="entry name" value="Aminopeptidase_M20"/>
    <property type="match status" value="1"/>
</dbReference>
<dbReference type="InterPro" id="IPR001261">
    <property type="entry name" value="ArgE/DapE_CS"/>
</dbReference>
<dbReference type="InterPro" id="IPR036264">
    <property type="entry name" value="Bact_exopeptidase_dim_dom"/>
</dbReference>
<dbReference type="InterPro" id="IPR002933">
    <property type="entry name" value="Peptidase_M20"/>
</dbReference>
<dbReference type="InterPro" id="IPR011650">
    <property type="entry name" value="Peptidase_M20_dimer"/>
</dbReference>
<dbReference type="InterPro" id="IPR010161">
    <property type="entry name" value="Peptidase_M20B"/>
</dbReference>
<dbReference type="NCBIfam" id="TIGR01882">
    <property type="entry name" value="peptidase-T"/>
    <property type="match status" value="1"/>
</dbReference>
<dbReference type="NCBIfam" id="NF003976">
    <property type="entry name" value="PRK05469.1"/>
    <property type="match status" value="1"/>
</dbReference>
<dbReference type="NCBIfam" id="NF009920">
    <property type="entry name" value="PRK13381.1"/>
    <property type="match status" value="1"/>
</dbReference>
<dbReference type="PANTHER" id="PTHR42994">
    <property type="entry name" value="PEPTIDASE T"/>
    <property type="match status" value="1"/>
</dbReference>
<dbReference type="PANTHER" id="PTHR42994:SF1">
    <property type="entry name" value="PEPTIDASE T"/>
    <property type="match status" value="1"/>
</dbReference>
<dbReference type="Pfam" id="PF07687">
    <property type="entry name" value="M20_dimer"/>
    <property type="match status" value="1"/>
</dbReference>
<dbReference type="Pfam" id="PF01546">
    <property type="entry name" value="Peptidase_M20"/>
    <property type="match status" value="1"/>
</dbReference>
<dbReference type="PIRSF" id="PIRSF037215">
    <property type="entry name" value="Peptidase_M20B"/>
    <property type="match status" value="1"/>
</dbReference>
<dbReference type="SUPFAM" id="SSF55031">
    <property type="entry name" value="Bacterial exopeptidase dimerisation domain"/>
    <property type="match status" value="1"/>
</dbReference>
<dbReference type="SUPFAM" id="SSF53187">
    <property type="entry name" value="Zn-dependent exopeptidases"/>
    <property type="match status" value="1"/>
</dbReference>
<dbReference type="PROSITE" id="PS00758">
    <property type="entry name" value="ARGE_DAPE_CPG2_1"/>
    <property type="match status" value="1"/>
</dbReference>
<dbReference type="PROSITE" id="PS00759">
    <property type="entry name" value="ARGE_DAPE_CPG2_2"/>
    <property type="match status" value="1"/>
</dbReference>
<organism>
    <name type="scientific">Bacillus pumilus (strain SAFR-032)</name>
    <dbReference type="NCBI Taxonomy" id="315750"/>
    <lineage>
        <taxon>Bacteria</taxon>
        <taxon>Bacillati</taxon>
        <taxon>Bacillota</taxon>
        <taxon>Bacilli</taxon>
        <taxon>Bacillales</taxon>
        <taxon>Bacillaceae</taxon>
        <taxon>Bacillus</taxon>
    </lineage>
</organism>
<reference key="1">
    <citation type="journal article" date="2007" name="PLoS ONE">
        <title>Paradoxical DNA repair and peroxide resistance gene conservation in Bacillus pumilus SAFR-032.</title>
        <authorList>
            <person name="Gioia J."/>
            <person name="Yerrapragada S."/>
            <person name="Qin X."/>
            <person name="Jiang H."/>
            <person name="Igboeli O.C."/>
            <person name="Muzny D."/>
            <person name="Dugan-Rocha S."/>
            <person name="Ding Y."/>
            <person name="Hawes A."/>
            <person name="Liu W."/>
            <person name="Perez L."/>
            <person name="Kovar C."/>
            <person name="Dinh H."/>
            <person name="Lee S."/>
            <person name="Nazareth L."/>
            <person name="Blyth P."/>
            <person name="Holder M."/>
            <person name="Buhay C."/>
            <person name="Tirumalai M.R."/>
            <person name="Liu Y."/>
            <person name="Dasgupta I."/>
            <person name="Bokhetache L."/>
            <person name="Fujita M."/>
            <person name="Karouia F."/>
            <person name="Eswara Moorthy P."/>
            <person name="Siefert J."/>
            <person name="Uzman A."/>
            <person name="Buzumbo P."/>
            <person name="Verma A."/>
            <person name="Zwiya H."/>
            <person name="McWilliams B.D."/>
            <person name="Olowu A."/>
            <person name="Clinkenbeard K.D."/>
            <person name="Newcombe D."/>
            <person name="Golebiewski L."/>
            <person name="Petrosino J.F."/>
            <person name="Nicholson W.L."/>
            <person name="Fox G.E."/>
            <person name="Venkateswaran K."/>
            <person name="Highlander S.K."/>
            <person name="Weinstock G.M."/>
        </authorList>
    </citation>
    <scope>NUCLEOTIDE SEQUENCE [LARGE SCALE GENOMIC DNA]</scope>
    <source>
        <strain>SAFR-032</strain>
    </source>
</reference>
<name>PEPT_BACP2</name>
<protein>
    <recommendedName>
        <fullName evidence="1">Peptidase T</fullName>
        <ecNumber evidence="1">3.4.11.4</ecNumber>
    </recommendedName>
    <alternativeName>
        <fullName evidence="1">Aminotripeptidase</fullName>
        <shortName evidence="1">Tripeptidase</shortName>
    </alternativeName>
    <alternativeName>
        <fullName evidence="1">Tripeptide aminopeptidase</fullName>
    </alternativeName>
</protein>
<proteinExistence type="inferred from homology"/>
<comment type="function">
    <text evidence="1">Cleaves the N-terminal amino acid of tripeptides.</text>
</comment>
<comment type="catalytic activity">
    <reaction evidence="1">
        <text>Release of the N-terminal residue from a tripeptide.</text>
        <dbReference type="EC" id="3.4.11.4"/>
    </reaction>
</comment>
<comment type="cofactor">
    <cofactor evidence="1">
        <name>Zn(2+)</name>
        <dbReference type="ChEBI" id="CHEBI:29105"/>
    </cofactor>
    <text evidence="1">Binds 2 Zn(2+) ions per subunit.</text>
</comment>
<comment type="subcellular location">
    <subcellularLocation>
        <location evidence="1">Cytoplasm</location>
    </subcellularLocation>
</comment>
<comment type="similarity">
    <text evidence="1">Belongs to the peptidase M20B family.</text>
</comment>
<evidence type="ECO:0000255" key="1">
    <source>
        <dbReference type="HAMAP-Rule" id="MF_00550"/>
    </source>
</evidence>
<gene>
    <name evidence="1" type="primary">pepT</name>
    <name type="ordered locus">BPUM_3555</name>
</gene>